<organism>
    <name type="scientific">Equine herpesvirus 1 (strain Ab4p)</name>
    <name type="common">EHV-1</name>
    <name type="synonym">Equine abortion virus</name>
    <dbReference type="NCBI Taxonomy" id="31520"/>
    <lineage>
        <taxon>Viruses</taxon>
        <taxon>Duplodnaviria</taxon>
        <taxon>Heunggongvirae</taxon>
        <taxon>Peploviricota</taxon>
        <taxon>Herviviricetes</taxon>
        <taxon>Herpesvirales</taxon>
        <taxon>Orthoherpesviridae</taxon>
        <taxon>Alphaherpesvirinae</taxon>
        <taxon>Varicellovirus</taxon>
        <taxon>Varicellovirus equidalpha1</taxon>
        <taxon>Equid alphaherpesvirus 1</taxon>
    </lineage>
</organism>
<sequence>MEDYKLLQLETATVDAQAPPLPTKTVPVFAPPLSTPPQPNELVYTKRRRTKRKAKCRCLFFTMGMFALGVLMTTAILVSTFILTVPIGALRTAPCPAETFGLGDECVRPVLLNASSNTRNISGVGAVCEEYSEMAASNGTAGLIMSLLDCLNVGDSESVMNKLNLDDTQLAYCNVPSFAECYTKGFGVCYAARPLSPLGELIYKARQALRLDHIIPFPR</sequence>
<reference key="1">
    <citation type="journal article" date="1992" name="Virology">
        <title>The DNA sequence of equine herpesvirus-1.</title>
        <authorList>
            <person name="Telford E.A.R."/>
            <person name="Watson M.S."/>
            <person name="McBride K."/>
            <person name="Davison A.J."/>
        </authorList>
    </citation>
    <scope>NUCLEOTIDE SEQUENCE [LARGE SCALE GENOMIC DNA]</scope>
</reference>
<reference key="2">
    <citation type="journal article" date="2001" name="Virology">
        <title>The equine herpesvirus 1 UL45 homolog encodes a glycosylated type II transmembrane protein and is involved in virus egress.</title>
        <authorList>
            <person name="Oettler D."/>
            <person name="Kaaden O.R."/>
            <person name="Neubauer A."/>
        </authorList>
    </citation>
    <scope>FUNCTION</scope>
    <scope>TOPOLOGY</scope>
    <scope>GLYCOSYLATION</scope>
    <source>
        <strain>RacH</strain>
        <strain>RacL22</strain>
    </source>
</reference>
<name>EV45_EHV1B</name>
<evidence type="ECO:0000250" key="1"/>
<evidence type="ECO:0000255" key="2"/>
<evidence type="ECO:0000269" key="3">
    <source>
    </source>
</evidence>
<evidence type="ECO:0000305" key="4"/>
<keyword id="KW-0325">Glycoprotein</keyword>
<keyword id="KW-0472">Membrane</keyword>
<keyword id="KW-1185">Reference proteome</keyword>
<keyword id="KW-0735">Signal-anchor</keyword>
<keyword id="KW-0812">Transmembrane</keyword>
<keyword id="KW-1133">Transmembrane helix</keyword>
<keyword id="KW-0261">Viral envelope protein</keyword>
<keyword id="KW-0946">Virion</keyword>
<gene>
    <name type="ordered locus">15</name>
</gene>
<feature type="chain" id="PRO_0000116165" description="Envelope protein UL45 homolog">
    <location>
        <begin position="1"/>
        <end position="219"/>
    </location>
</feature>
<feature type="topological domain" description="Intravirion" evidence="2">
    <location>
        <begin position="1"/>
        <end position="57"/>
    </location>
</feature>
<feature type="transmembrane region" description="Helical; Signal-anchor for type II membrane protein" evidence="2">
    <location>
        <begin position="58"/>
        <end position="78"/>
    </location>
</feature>
<feature type="topological domain" description="Virion surface" evidence="2">
    <location>
        <begin position="79"/>
        <end position="219"/>
    </location>
</feature>
<feature type="glycosylation site" description="N-linked (GlcNAc...) asparagine; by host" evidence="2">
    <location>
        <position position="113"/>
    </location>
</feature>
<feature type="glycosylation site" description="N-linked (GlcNAc...) asparagine; by host" evidence="2">
    <location>
        <position position="120"/>
    </location>
</feature>
<feature type="glycosylation site" description="N-linked (GlcNAc...) asparagine; by host" evidence="2">
    <location>
        <position position="138"/>
    </location>
</feature>
<proteinExistence type="evidence at protein level"/>
<dbReference type="EMBL" id="AY665713">
    <property type="protein sequence ID" value="AAT67272.1"/>
    <property type="molecule type" value="Genomic_DNA"/>
</dbReference>
<dbReference type="SMR" id="P28981"/>
<dbReference type="Proteomes" id="UP000001189">
    <property type="component" value="Segment"/>
</dbReference>
<dbReference type="GO" id="GO:0016020">
    <property type="term" value="C:membrane"/>
    <property type="evidence" value="ECO:0007669"/>
    <property type="project" value="UniProtKB-KW"/>
</dbReference>
<dbReference type="GO" id="GO:0019031">
    <property type="term" value="C:viral envelope"/>
    <property type="evidence" value="ECO:0007669"/>
    <property type="project" value="UniProtKB-KW"/>
</dbReference>
<dbReference type="GO" id="GO:0055036">
    <property type="term" value="C:virion membrane"/>
    <property type="evidence" value="ECO:0007669"/>
    <property type="project" value="UniProtKB-SubCell"/>
</dbReference>
<dbReference type="Pfam" id="PF05473">
    <property type="entry name" value="UL45"/>
    <property type="match status" value="1"/>
</dbReference>
<organismHost>
    <name type="scientific">Equus caballus</name>
    <name type="common">Horse</name>
    <dbReference type="NCBI Taxonomy" id="9796"/>
</organismHost>
<accession>P28981</accession>
<accession>Q6DLJ6</accession>
<protein>
    <recommendedName>
        <fullName>Envelope protein UL45 homolog</fullName>
    </recommendedName>
</protein>
<comment type="subcellular location">
    <subcellularLocation>
        <location evidence="1">Virion membrane</location>
        <topology evidence="1">Single-pass type II membrane protein</topology>
    </subcellularLocation>
</comment>
<comment type="PTM">
    <text evidence="3">N-glycosylated.</text>
</comment>
<comment type="similarity">
    <text evidence="4">Belongs to the herpesviridae HHV-1 UL45 family.</text>
</comment>